<proteinExistence type="inferred from homology"/>
<dbReference type="EC" id="4.3.2.2" evidence="2"/>
<dbReference type="EMBL" id="AE015929">
    <property type="protein sequence ID" value="AAO05192.1"/>
    <property type="molecule type" value="Genomic_DNA"/>
</dbReference>
<dbReference type="RefSeq" id="NP_765148.1">
    <property type="nucleotide sequence ID" value="NC_004461.1"/>
</dbReference>
<dbReference type="RefSeq" id="WP_002440416.1">
    <property type="nucleotide sequence ID" value="NZ_WBME01000010.1"/>
</dbReference>
<dbReference type="SMR" id="Q8CRT6"/>
<dbReference type="KEGG" id="sep:SE_1593"/>
<dbReference type="PATRIC" id="fig|176280.10.peg.1557"/>
<dbReference type="eggNOG" id="COG0015">
    <property type="taxonomic scope" value="Bacteria"/>
</dbReference>
<dbReference type="HOGENOM" id="CLU_030949_0_1_9"/>
<dbReference type="OrthoDB" id="9768878at2"/>
<dbReference type="UniPathway" id="UPA00074">
    <property type="reaction ID" value="UER00132"/>
</dbReference>
<dbReference type="UniPathway" id="UPA00075">
    <property type="reaction ID" value="UER00336"/>
</dbReference>
<dbReference type="Proteomes" id="UP000001411">
    <property type="component" value="Chromosome"/>
</dbReference>
<dbReference type="GO" id="GO:0005829">
    <property type="term" value="C:cytosol"/>
    <property type="evidence" value="ECO:0007669"/>
    <property type="project" value="TreeGrafter"/>
</dbReference>
<dbReference type="GO" id="GO:0070626">
    <property type="term" value="F:(S)-2-(5-amino-1-(5-phospho-D-ribosyl)imidazole-4-carboxamido) succinate lyase (fumarate-forming) activity"/>
    <property type="evidence" value="ECO:0007669"/>
    <property type="project" value="TreeGrafter"/>
</dbReference>
<dbReference type="GO" id="GO:0004018">
    <property type="term" value="F:N6-(1,2-dicarboxyethyl)AMP AMP-lyase (fumarate-forming) activity"/>
    <property type="evidence" value="ECO:0007669"/>
    <property type="project" value="InterPro"/>
</dbReference>
<dbReference type="GO" id="GO:0044208">
    <property type="term" value="P:'de novo' AMP biosynthetic process"/>
    <property type="evidence" value="ECO:0007669"/>
    <property type="project" value="UniProtKB-UniPathway"/>
</dbReference>
<dbReference type="GO" id="GO:0006189">
    <property type="term" value="P:'de novo' IMP biosynthetic process"/>
    <property type="evidence" value="ECO:0007669"/>
    <property type="project" value="UniProtKB-UniPathway"/>
</dbReference>
<dbReference type="CDD" id="cd01360">
    <property type="entry name" value="Adenylsuccinate_lyase_1"/>
    <property type="match status" value="1"/>
</dbReference>
<dbReference type="FunFam" id="1.10.275.10:FF:000006">
    <property type="entry name" value="Adenylosuccinate lyase"/>
    <property type="match status" value="1"/>
</dbReference>
<dbReference type="FunFam" id="1.10.40.30:FF:000007">
    <property type="entry name" value="Adenylosuccinate lyase"/>
    <property type="match status" value="1"/>
</dbReference>
<dbReference type="FunFam" id="1.20.200.10:FF:000008">
    <property type="entry name" value="Adenylosuccinate lyase"/>
    <property type="match status" value="1"/>
</dbReference>
<dbReference type="Gene3D" id="1.10.40.30">
    <property type="entry name" value="Fumarase/aspartase (C-terminal domain)"/>
    <property type="match status" value="1"/>
</dbReference>
<dbReference type="Gene3D" id="1.20.200.10">
    <property type="entry name" value="Fumarase/aspartase (Central domain)"/>
    <property type="match status" value="1"/>
</dbReference>
<dbReference type="Gene3D" id="1.10.275.10">
    <property type="entry name" value="Fumarase/aspartase (N-terminal domain)"/>
    <property type="match status" value="1"/>
</dbReference>
<dbReference type="InterPro" id="IPR019468">
    <property type="entry name" value="AdenyloSucc_lyase_C"/>
</dbReference>
<dbReference type="InterPro" id="IPR024083">
    <property type="entry name" value="Fumarase/histidase_N"/>
</dbReference>
<dbReference type="InterPro" id="IPR020557">
    <property type="entry name" value="Fumarate_lyase_CS"/>
</dbReference>
<dbReference type="InterPro" id="IPR000362">
    <property type="entry name" value="Fumarate_lyase_fam"/>
</dbReference>
<dbReference type="InterPro" id="IPR022761">
    <property type="entry name" value="Fumarate_lyase_N"/>
</dbReference>
<dbReference type="InterPro" id="IPR008948">
    <property type="entry name" value="L-Aspartase-like"/>
</dbReference>
<dbReference type="InterPro" id="IPR004769">
    <property type="entry name" value="Pur_lyase"/>
</dbReference>
<dbReference type="NCBIfam" id="TIGR00928">
    <property type="entry name" value="purB"/>
    <property type="match status" value="1"/>
</dbReference>
<dbReference type="PANTHER" id="PTHR43172">
    <property type="entry name" value="ADENYLOSUCCINATE LYASE"/>
    <property type="match status" value="1"/>
</dbReference>
<dbReference type="PANTHER" id="PTHR43172:SF1">
    <property type="entry name" value="ADENYLOSUCCINATE LYASE"/>
    <property type="match status" value="1"/>
</dbReference>
<dbReference type="Pfam" id="PF10397">
    <property type="entry name" value="ADSL_C"/>
    <property type="match status" value="1"/>
</dbReference>
<dbReference type="Pfam" id="PF00206">
    <property type="entry name" value="Lyase_1"/>
    <property type="match status" value="1"/>
</dbReference>
<dbReference type="PRINTS" id="PR00145">
    <property type="entry name" value="ARGSUCLYASE"/>
</dbReference>
<dbReference type="PRINTS" id="PR00149">
    <property type="entry name" value="FUMRATELYASE"/>
</dbReference>
<dbReference type="SMART" id="SM00998">
    <property type="entry name" value="ADSL_C"/>
    <property type="match status" value="1"/>
</dbReference>
<dbReference type="SUPFAM" id="SSF48557">
    <property type="entry name" value="L-aspartase-like"/>
    <property type="match status" value="1"/>
</dbReference>
<dbReference type="PROSITE" id="PS00163">
    <property type="entry name" value="FUMARATE_LYASES"/>
    <property type="match status" value="1"/>
</dbReference>
<gene>
    <name type="primary">purB</name>
    <name type="ordered locus">SE_1593</name>
</gene>
<name>PUR8_STAES</name>
<feature type="chain" id="PRO_0000259982" description="Adenylosuccinate lyase">
    <location>
        <begin position="1"/>
        <end position="431"/>
    </location>
</feature>
<feature type="active site" description="Proton donor/acceptor" evidence="2">
    <location>
        <position position="141"/>
    </location>
</feature>
<feature type="active site" description="Proton donor/acceptor" evidence="2">
    <location>
        <position position="262"/>
    </location>
</feature>
<feature type="binding site" evidence="2">
    <location>
        <begin position="4"/>
        <end position="5"/>
    </location>
    <ligand>
        <name>N(6)-(1,2-dicarboxyethyl)-AMP</name>
        <dbReference type="ChEBI" id="CHEBI:57567"/>
    </ligand>
</feature>
<feature type="binding site" evidence="2">
    <location>
        <begin position="67"/>
        <end position="69"/>
    </location>
    <ligand>
        <name>N(6)-(1,2-dicarboxyethyl)-AMP</name>
        <dbReference type="ChEBI" id="CHEBI:57567"/>
    </ligand>
</feature>
<feature type="binding site" evidence="2">
    <location>
        <begin position="93"/>
        <end position="94"/>
    </location>
    <ligand>
        <name>N(6)-(1,2-dicarboxyethyl)-AMP</name>
        <dbReference type="ChEBI" id="CHEBI:57567"/>
    </ligand>
</feature>
<feature type="binding site" evidence="2">
    <location>
        <position position="212"/>
    </location>
    <ligand>
        <name>N(6)-(1,2-dicarboxyethyl)-AMP</name>
        <dbReference type="ChEBI" id="CHEBI:57567"/>
    </ligand>
</feature>
<feature type="binding site" evidence="2">
    <location>
        <position position="263"/>
    </location>
    <ligand>
        <name>N(6)-(1,2-dicarboxyethyl)-AMP</name>
        <dbReference type="ChEBI" id="CHEBI:57567"/>
    </ligand>
</feature>
<feature type="binding site" evidence="2">
    <location>
        <begin position="268"/>
        <end position="270"/>
    </location>
    <ligand>
        <name>N(6)-(1,2-dicarboxyethyl)-AMP</name>
        <dbReference type="ChEBI" id="CHEBI:57567"/>
    </ligand>
</feature>
<feature type="binding site" evidence="2">
    <location>
        <position position="276"/>
    </location>
    <ligand>
        <name>N(6)-(1,2-dicarboxyethyl)-AMP</name>
        <dbReference type="ChEBI" id="CHEBI:57567"/>
    </ligand>
</feature>
<feature type="binding site" evidence="2">
    <location>
        <begin position="307"/>
        <end position="311"/>
    </location>
    <ligand>
        <name>N(6)-(1,2-dicarboxyethyl)-AMP</name>
        <dbReference type="ChEBI" id="CHEBI:57567"/>
    </ligand>
</feature>
<keyword id="KW-0456">Lyase</keyword>
<keyword id="KW-0658">Purine biosynthesis</keyword>
<sequence>MIERYSRDEMSSIWTDQNRYEAWLEVEILACEAWSELGYIPKEDVKKIRENAKVNVERAKEIEQETRHDVVAFTRQVSETLGDERKWVHYGLTSTDVVDTALSYVIKQANEILEKDLERFIDVLAAKAKKYQYTLMMGRTHGVHAEPTTFGVKMALWYTEMKRNLKRFKEVRKEIEVGKMSGAVGTFANIPPEIEAYVCEHLGIDTAAVSTQTLQRDRHAYYIATLALIATSMEKFAVEIRNLQKTETREVEEAFAKGQKGSSAMPHKRNPIGSENITGISRVIRGYITTAYENIPLWHERDISHSSAERIMLPDVTIALDYALNRFTNIVDRLTVYEDNMRNNIDKTYGLIFSQRVLLALINKGMVREEAYDKVQPKAMESWETKTPFRELIEQDSSITDVLSSEELDDCFDPKHHLNQVDTIFARAGLS</sequence>
<protein>
    <recommendedName>
        <fullName>Adenylosuccinate lyase</fullName>
        <shortName>ASL</shortName>
        <ecNumber evidence="2">4.3.2.2</ecNumber>
    </recommendedName>
    <alternativeName>
        <fullName>Adenylosuccinase</fullName>
        <shortName>ASase</shortName>
    </alternativeName>
</protein>
<evidence type="ECO:0000250" key="1"/>
<evidence type="ECO:0000250" key="2">
    <source>
        <dbReference type="UniProtKB" id="P0AB89"/>
    </source>
</evidence>
<evidence type="ECO:0000305" key="3"/>
<reference key="1">
    <citation type="journal article" date="2003" name="Mol. Microbiol.">
        <title>Genome-based analysis of virulence genes in a non-biofilm-forming Staphylococcus epidermidis strain (ATCC 12228).</title>
        <authorList>
            <person name="Zhang Y.-Q."/>
            <person name="Ren S.-X."/>
            <person name="Li H.-L."/>
            <person name="Wang Y.-X."/>
            <person name="Fu G."/>
            <person name="Yang J."/>
            <person name="Qin Z.-Q."/>
            <person name="Miao Y.-G."/>
            <person name="Wang W.-Y."/>
            <person name="Chen R.-S."/>
            <person name="Shen Y."/>
            <person name="Chen Z."/>
            <person name="Yuan Z.-H."/>
            <person name="Zhao G.-P."/>
            <person name="Qu D."/>
            <person name="Danchin A."/>
            <person name="Wen Y.-M."/>
        </authorList>
    </citation>
    <scope>NUCLEOTIDE SEQUENCE [LARGE SCALE GENOMIC DNA]</scope>
    <source>
        <strain>ATCC 12228 / FDA PCI 1200</strain>
    </source>
</reference>
<accession>Q8CRT6</accession>
<organism>
    <name type="scientific">Staphylococcus epidermidis (strain ATCC 12228 / FDA PCI 1200)</name>
    <dbReference type="NCBI Taxonomy" id="176280"/>
    <lineage>
        <taxon>Bacteria</taxon>
        <taxon>Bacillati</taxon>
        <taxon>Bacillota</taxon>
        <taxon>Bacilli</taxon>
        <taxon>Bacillales</taxon>
        <taxon>Staphylococcaceae</taxon>
        <taxon>Staphylococcus</taxon>
    </lineage>
</organism>
<comment type="function">
    <text evidence="2">Catalyzes two reactions in de novo purine nucleotide biosynthesis. Catalyzes the breakdown of 5-aminoimidazole- (N-succinylocarboxamide) ribotide (SAICAR or 2-[5-amino-1-(5-phospho-beta-D-ribosyl)imidazole-4-carboxamido]succinate) to 5-aminoimidazole-4-carboxamide ribotide (AICAR or 5-amino-1-(5-phospho-beta-D-ribosyl)imidazole-4-carboxamide) and fumarate, and of adenylosuccinate (ADS or N(6)-(1,2-dicarboxyethyl)-AMP) to adenosine monophosphate (AMP) and fumarate.</text>
</comment>
<comment type="catalytic activity">
    <reaction evidence="2">
        <text>N(6)-(1,2-dicarboxyethyl)-AMP = fumarate + AMP</text>
        <dbReference type="Rhea" id="RHEA:16853"/>
        <dbReference type="ChEBI" id="CHEBI:29806"/>
        <dbReference type="ChEBI" id="CHEBI:57567"/>
        <dbReference type="ChEBI" id="CHEBI:456215"/>
        <dbReference type="EC" id="4.3.2.2"/>
    </reaction>
    <physiologicalReaction direction="left-to-right" evidence="2">
        <dbReference type="Rhea" id="RHEA:16854"/>
    </physiologicalReaction>
</comment>
<comment type="catalytic activity">
    <reaction evidence="2">
        <text>(2S)-2-[5-amino-1-(5-phospho-beta-D-ribosyl)imidazole-4-carboxamido]succinate = 5-amino-1-(5-phospho-beta-D-ribosyl)imidazole-4-carboxamide + fumarate</text>
        <dbReference type="Rhea" id="RHEA:23920"/>
        <dbReference type="ChEBI" id="CHEBI:29806"/>
        <dbReference type="ChEBI" id="CHEBI:58443"/>
        <dbReference type="ChEBI" id="CHEBI:58475"/>
        <dbReference type="EC" id="4.3.2.2"/>
    </reaction>
    <physiologicalReaction direction="left-to-right" evidence="2">
        <dbReference type="Rhea" id="RHEA:23921"/>
    </physiologicalReaction>
</comment>
<comment type="pathway">
    <text>Purine metabolism; AMP biosynthesis via de novo pathway; AMP from IMP: step 2/2.</text>
</comment>
<comment type="pathway">
    <text>Purine metabolism; IMP biosynthesis via de novo pathway; 5-amino-1-(5-phospho-D-ribosyl)imidazole-4-carboxamide from 5-amino-1-(5-phospho-D-ribosyl)imidazole-4-carboxylate: step 2/2.</text>
</comment>
<comment type="subunit">
    <text evidence="1">Homodimer and homotetramer. Residues from neighboring subunits contribute catalytic and substrate-binding residues to each active site (By similarity).</text>
</comment>
<comment type="similarity">
    <text evidence="3">Belongs to the lyase 1 family. Adenylosuccinate lyase subfamily.</text>
</comment>